<protein>
    <recommendedName>
        <fullName evidence="1">ATP-dependent helicase/nuclease subunit A</fullName>
        <ecNumber evidence="1">3.1.-.-</ecNumber>
        <ecNumber evidence="1">5.6.2.4</ecNumber>
    </recommendedName>
    <alternativeName>
        <fullName evidence="1">ATP-dependent helicase/nuclease AddA</fullName>
    </alternativeName>
    <alternativeName>
        <fullName evidence="1">DNA 3'-5' helicase AddA</fullName>
    </alternativeName>
</protein>
<comment type="function">
    <text evidence="1">The heterodimer acts as both an ATP-dependent DNA helicase and an ATP-dependent, dual-direction single-stranded exonuclease. Recognizes the chi site generating a DNA molecule suitable for the initiation of homologous recombination. The AddA nuclease domain is required for chi fragment generation; this subunit has the helicase and 3' -&gt; 5' nuclease activities.</text>
</comment>
<comment type="catalytic activity">
    <reaction evidence="1">
        <text>Couples ATP hydrolysis with the unwinding of duplex DNA by translocating in the 3'-5' direction.</text>
        <dbReference type="EC" id="5.6.2.4"/>
    </reaction>
</comment>
<comment type="catalytic activity">
    <reaction evidence="1">
        <text>ATP + H2O = ADP + phosphate + H(+)</text>
        <dbReference type="Rhea" id="RHEA:13065"/>
        <dbReference type="ChEBI" id="CHEBI:15377"/>
        <dbReference type="ChEBI" id="CHEBI:15378"/>
        <dbReference type="ChEBI" id="CHEBI:30616"/>
        <dbReference type="ChEBI" id="CHEBI:43474"/>
        <dbReference type="ChEBI" id="CHEBI:456216"/>
        <dbReference type="EC" id="5.6.2.4"/>
    </reaction>
</comment>
<comment type="cofactor">
    <cofactor evidence="1">
        <name>Mg(2+)</name>
        <dbReference type="ChEBI" id="CHEBI:18420"/>
    </cofactor>
</comment>
<comment type="subunit">
    <text evidence="1">Heterodimer of AddA and AddB/RexB.</text>
</comment>
<comment type="similarity">
    <text evidence="1">Belongs to the helicase family. AddA subfamily.</text>
</comment>
<keyword id="KW-0067">ATP-binding</keyword>
<keyword id="KW-0227">DNA damage</keyword>
<keyword id="KW-0234">DNA repair</keyword>
<keyword id="KW-0238">DNA-binding</keyword>
<keyword id="KW-0269">Exonuclease</keyword>
<keyword id="KW-0347">Helicase</keyword>
<keyword id="KW-0378">Hydrolase</keyword>
<keyword id="KW-0413">Isomerase</keyword>
<keyword id="KW-0540">Nuclease</keyword>
<keyword id="KW-0547">Nucleotide-binding</keyword>
<dbReference type="EC" id="3.1.-.-" evidence="1"/>
<dbReference type="EC" id="5.6.2.4" evidence="1"/>
<dbReference type="EMBL" id="CP000056">
    <property type="protein sequence ID" value="AAX71688.1"/>
    <property type="molecule type" value="Genomic_DNA"/>
</dbReference>
<dbReference type="RefSeq" id="WP_021340765.1">
    <property type="nucleotide sequence ID" value="NC_007296.2"/>
</dbReference>
<dbReference type="SMR" id="Q48UB8"/>
<dbReference type="KEGG" id="spb:M28_Spy0574"/>
<dbReference type="HOGENOM" id="CLU_001114_3_1_9"/>
<dbReference type="GO" id="GO:0005829">
    <property type="term" value="C:cytosol"/>
    <property type="evidence" value="ECO:0007669"/>
    <property type="project" value="TreeGrafter"/>
</dbReference>
<dbReference type="GO" id="GO:0033202">
    <property type="term" value="C:DNA helicase complex"/>
    <property type="evidence" value="ECO:0007669"/>
    <property type="project" value="TreeGrafter"/>
</dbReference>
<dbReference type="GO" id="GO:0043138">
    <property type="term" value="F:3'-5' DNA helicase activity"/>
    <property type="evidence" value="ECO:0007669"/>
    <property type="project" value="UniProtKB-UniRule"/>
</dbReference>
<dbReference type="GO" id="GO:0008408">
    <property type="term" value="F:3'-5' exonuclease activity"/>
    <property type="evidence" value="ECO:0007669"/>
    <property type="project" value="UniProtKB-UniRule"/>
</dbReference>
<dbReference type="GO" id="GO:0005524">
    <property type="term" value="F:ATP binding"/>
    <property type="evidence" value="ECO:0007669"/>
    <property type="project" value="UniProtKB-UniRule"/>
</dbReference>
<dbReference type="GO" id="GO:0016887">
    <property type="term" value="F:ATP hydrolysis activity"/>
    <property type="evidence" value="ECO:0007669"/>
    <property type="project" value="RHEA"/>
</dbReference>
<dbReference type="GO" id="GO:0003690">
    <property type="term" value="F:double-stranded DNA binding"/>
    <property type="evidence" value="ECO:0007669"/>
    <property type="project" value="UniProtKB-UniRule"/>
</dbReference>
<dbReference type="GO" id="GO:0000724">
    <property type="term" value="P:double-strand break repair via homologous recombination"/>
    <property type="evidence" value="ECO:0007669"/>
    <property type="project" value="UniProtKB-UniRule"/>
</dbReference>
<dbReference type="CDD" id="cd17932">
    <property type="entry name" value="DEXQc_UvrD"/>
    <property type="match status" value="1"/>
</dbReference>
<dbReference type="Gene3D" id="3.90.320.10">
    <property type="match status" value="1"/>
</dbReference>
<dbReference type="Gene3D" id="3.40.50.300">
    <property type="entry name" value="P-loop containing nucleotide triphosphate hydrolases"/>
    <property type="match status" value="4"/>
</dbReference>
<dbReference type="Gene3D" id="1.10.486.10">
    <property type="entry name" value="PCRA, domain 4"/>
    <property type="match status" value="1"/>
</dbReference>
<dbReference type="HAMAP" id="MF_01451">
    <property type="entry name" value="AddA"/>
    <property type="match status" value="1"/>
</dbReference>
<dbReference type="InterPro" id="IPR014152">
    <property type="entry name" value="AddA"/>
</dbReference>
<dbReference type="InterPro" id="IPR014017">
    <property type="entry name" value="DNA_helicase_UvrD-like_C"/>
</dbReference>
<dbReference type="InterPro" id="IPR000212">
    <property type="entry name" value="DNA_helicase_UvrD/REP"/>
</dbReference>
<dbReference type="InterPro" id="IPR027417">
    <property type="entry name" value="P-loop_NTPase"/>
</dbReference>
<dbReference type="InterPro" id="IPR011604">
    <property type="entry name" value="PDDEXK-like_dom_sf"/>
</dbReference>
<dbReference type="InterPro" id="IPR038726">
    <property type="entry name" value="PDDEXK_AddAB-type"/>
</dbReference>
<dbReference type="InterPro" id="IPR011335">
    <property type="entry name" value="Restrct_endonuc-II-like"/>
</dbReference>
<dbReference type="InterPro" id="IPR014016">
    <property type="entry name" value="UvrD-like_ATP-bd"/>
</dbReference>
<dbReference type="NCBIfam" id="TIGR02785">
    <property type="entry name" value="addA_Gpos"/>
    <property type="match status" value="1"/>
</dbReference>
<dbReference type="PANTHER" id="PTHR11070:SF48">
    <property type="entry name" value="ATP-DEPENDENT HELICASE_NUCLEASE SUBUNIT A"/>
    <property type="match status" value="1"/>
</dbReference>
<dbReference type="PANTHER" id="PTHR11070">
    <property type="entry name" value="UVRD / RECB / PCRA DNA HELICASE FAMILY MEMBER"/>
    <property type="match status" value="1"/>
</dbReference>
<dbReference type="Pfam" id="PF12705">
    <property type="entry name" value="PDDEXK_1"/>
    <property type="match status" value="1"/>
</dbReference>
<dbReference type="Pfam" id="PF00580">
    <property type="entry name" value="UvrD-helicase"/>
    <property type="match status" value="1"/>
</dbReference>
<dbReference type="Pfam" id="PF13361">
    <property type="entry name" value="UvrD_C"/>
    <property type="match status" value="1"/>
</dbReference>
<dbReference type="SUPFAM" id="SSF52540">
    <property type="entry name" value="P-loop containing nucleoside triphosphate hydrolases"/>
    <property type="match status" value="1"/>
</dbReference>
<dbReference type="SUPFAM" id="SSF52980">
    <property type="entry name" value="Restriction endonuclease-like"/>
    <property type="match status" value="1"/>
</dbReference>
<dbReference type="PROSITE" id="PS51198">
    <property type="entry name" value="UVRD_HELICASE_ATP_BIND"/>
    <property type="match status" value="1"/>
</dbReference>
<dbReference type="PROSITE" id="PS51217">
    <property type="entry name" value="UVRD_HELICASE_CTER"/>
    <property type="match status" value="1"/>
</dbReference>
<organism>
    <name type="scientific">Streptococcus pyogenes serotype M28 (strain MGAS6180)</name>
    <dbReference type="NCBI Taxonomy" id="319701"/>
    <lineage>
        <taxon>Bacteria</taxon>
        <taxon>Bacillati</taxon>
        <taxon>Bacillota</taxon>
        <taxon>Bacilli</taxon>
        <taxon>Lactobacillales</taxon>
        <taxon>Streptococcaceae</taxon>
        <taxon>Streptococcus</taxon>
    </lineage>
</organism>
<accession>Q48UB8</accession>
<gene>
    <name evidence="1" type="primary">addA</name>
    <name type="synonym">rexA</name>
    <name type="ordered locus">M28_Spy0574</name>
</gene>
<proteinExistence type="inferred from homology"/>
<feature type="chain" id="PRO_0000379345" description="ATP-dependent helicase/nuclease subunit A">
    <location>
        <begin position="1"/>
        <end position="1222"/>
    </location>
</feature>
<feature type="domain" description="UvrD-like helicase ATP-binding" evidence="1">
    <location>
        <begin position="39"/>
        <end position="495"/>
    </location>
</feature>
<feature type="domain" description="UvrD-like helicase C-terminal" evidence="1">
    <location>
        <begin position="524"/>
        <end position="810"/>
    </location>
</feature>
<feature type="binding site" evidence="1">
    <location>
        <begin position="60"/>
        <end position="67"/>
    </location>
    <ligand>
        <name>ATP</name>
        <dbReference type="ChEBI" id="CHEBI:30616"/>
    </ligand>
</feature>
<evidence type="ECO:0000255" key="1">
    <source>
        <dbReference type="HAMAP-Rule" id="MF_01451"/>
    </source>
</evidence>
<sequence length="1222" mass="140318">MLFNINEKGEPLVISFAPFLSPEAIKHLQENERCSDQSQKRTAQQIEAIYTSGQNILVSASAGSGKTFVMVERILDKILRGVSIDRLFISTFTVKAATELRERIENKLYSQIAQTTDFQMKVYLTEQLQSLGQADIGTMDAFAQKVVSRYGYSIGISSQFRIMQDKAEQDVLKQEVFSKLFSEFMNQKEAPVFRALVKNFSGNCKDTSAFRELVYTCYSFSQSTENPKIWLQENFLSAAKTYQRLEDIPDHDIELLLLAMQDTANQLRDVTDMEDYGQLTKAGSRSAKYTKHLTIIEKLSDWVRDFKCLYGKAGLDRLIRDVTGLIPSGNDVTVSKVKYPVFKTLHQKLKQFRHLETILMYQKDCFPLLEQLQDFVLAFSEAYLAVKIQESAFEFSDITHFAIKILEENTDIRQSYQQHYHEVMVDEYQDNNHMQERLLTLLSNGHNRFMVGDIKQSIYRFRQADPQIFNQKFRDYQKKPEQGKVILLKENFRSQSEVLNVSNAVFSHLMDESVGDVLYDEQHQLIAGSHAQTVPYLDRRAQLLLYNSDKDDGNAPSDSEGISFSEVTIVAKEIIKLHNDKGVPFEDITLLVSSRTRNDIISHTFNQYSIPIVTDGGQQNYLKSVEVMVMLDTLRTINNPRNDYALVALLRSPMFAFDEDDLARIALQKDNELDKDCLYDKIQRAVIGRGAHPELIHDTLLGKLNIFLKTLKSWRRYAKLGSLYDLIWKIFNDRFYFDFVASQAKAEQAQANLYALALRANQFEKSGYKGLYRFIKMIDKVLETQNDLADVEVAAPKQAVNLMTIHKSKGLQFPYVFILNCDKRFSMTDIHKSFILNRQHGIGIKYLADIKGLLGETTLNSVKVSMETLPYQLNKQELRLATLSEQMRLLYVAMTRAEKKVYFIGKASKSKSQDITDPKKLGKLLPLALREQLLTFQDWLLAIADIFSTEDLYFDVRFIEDSDLTQESVGRLQTPQLLNPDDLKDNRQSETIARALDMLEAVSQLNANYEAAIHLPTVRTPSQLKAAYEPLLEPIGVDIIEKSSRSLSDFTLPHFSKKVKVEASHIGSALHQLMQVLPLSKPINQQTLLDALREIDSNEEVKTALDLKKIESFFCDTSLGQFFQTYQKHLYREAPFAILKVDPISQEEYVLRGIIDAYFLFDDHIVLVDYKTDKYKQPIELKKRYQQQLELYAEALTQTYKLPVTKRYLVLMGGGKPEIVEV</sequence>
<reference key="1">
    <citation type="journal article" date="2005" name="J. Infect. Dis.">
        <title>Genome sequence of a serotype M28 strain of group A Streptococcus: potential new insights into puerperal sepsis and bacterial disease specificity.</title>
        <authorList>
            <person name="Green N.M."/>
            <person name="Zhang S."/>
            <person name="Porcella S.F."/>
            <person name="Nagiec M.J."/>
            <person name="Barbian K.D."/>
            <person name="Beres S.B."/>
            <person name="Lefebvre R.B."/>
            <person name="Musser J.M."/>
        </authorList>
    </citation>
    <scope>NUCLEOTIDE SEQUENCE [LARGE SCALE GENOMIC DNA]</scope>
    <source>
        <strain>MGAS6180</strain>
    </source>
</reference>
<name>ADDA_STRPM</name>